<name>ERG24_MOUSE</name>
<evidence type="ECO:0000250" key="1">
    <source>
        <dbReference type="UniProtKB" id="G4SW86"/>
    </source>
</evidence>
<evidence type="ECO:0000250" key="2">
    <source>
        <dbReference type="UniProtKB" id="O76062"/>
    </source>
</evidence>
<evidence type="ECO:0000250" key="3">
    <source>
        <dbReference type="UniProtKB" id="Q8WMV1"/>
    </source>
</evidence>
<evidence type="ECO:0000255" key="4"/>
<evidence type="ECO:0000269" key="5">
    <source>
    </source>
</evidence>
<evidence type="ECO:0000305" key="6"/>
<organism>
    <name type="scientific">Mus musculus</name>
    <name type="common">Mouse</name>
    <dbReference type="NCBI Taxonomy" id="10090"/>
    <lineage>
        <taxon>Eukaryota</taxon>
        <taxon>Metazoa</taxon>
        <taxon>Chordata</taxon>
        <taxon>Craniata</taxon>
        <taxon>Vertebrata</taxon>
        <taxon>Euteleostomi</taxon>
        <taxon>Mammalia</taxon>
        <taxon>Eutheria</taxon>
        <taxon>Euarchontoglires</taxon>
        <taxon>Glires</taxon>
        <taxon>Rodentia</taxon>
        <taxon>Myomorpha</taxon>
        <taxon>Muroidea</taxon>
        <taxon>Muridae</taxon>
        <taxon>Murinae</taxon>
        <taxon>Mus</taxon>
        <taxon>Mus</taxon>
    </lineage>
</organism>
<comment type="function">
    <text evidence="5">Catalyzes the reduction of the C14-unsaturated bond of lanosterol, as part of the metabolic pathway leading to cholesterol biosynthesis.</text>
</comment>
<comment type="catalytic activity">
    <reaction evidence="3">
        <text>4,4-dimethyl-5alpha-cholesta-8,24-dien-3beta-ol + NADP(+) = 4,4-dimethyl-5alpha-cholesta-8,14,24-trien-3beta-ol + NADPH + H(+)</text>
        <dbReference type="Rhea" id="RHEA:18561"/>
        <dbReference type="ChEBI" id="CHEBI:15378"/>
        <dbReference type="ChEBI" id="CHEBI:17813"/>
        <dbReference type="ChEBI" id="CHEBI:18364"/>
        <dbReference type="ChEBI" id="CHEBI:57783"/>
        <dbReference type="ChEBI" id="CHEBI:58349"/>
        <dbReference type="EC" id="1.3.1.70"/>
    </reaction>
</comment>
<comment type="catalytic activity">
    <reaction evidence="5">
        <text>5alpha-cholest-8,14-dien-3beta-ol + NADPH + H(+) = 5alpha-cholest-8-en-3beta-ol + NADP(+)</text>
        <dbReference type="Rhea" id="RHEA:46456"/>
        <dbReference type="ChEBI" id="CHEBI:15378"/>
        <dbReference type="ChEBI" id="CHEBI:16608"/>
        <dbReference type="ChEBI" id="CHEBI:57783"/>
        <dbReference type="ChEBI" id="CHEBI:58349"/>
        <dbReference type="ChEBI" id="CHEBI:86131"/>
    </reaction>
</comment>
<comment type="catalytic activity">
    <reaction evidence="3">
        <text>4,4-dimethyl-8,14-cholestadien-3beta-ol + NADPH + H(+) = 4,4-dimethyl-5alpha-cholest-8-en-3beta-ol + NADP(+)</text>
        <dbReference type="Rhea" id="RHEA:46812"/>
        <dbReference type="ChEBI" id="CHEBI:15378"/>
        <dbReference type="ChEBI" id="CHEBI:57783"/>
        <dbReference type="ChEBI" id="CHEBI:58349"/>
        <dbReference type="ChEBI" id="CHEBI:78904"/>
        <dbReference type="ChEBI" id="CHEBI:87044"/>
    </reaction>
</comment>
<comment type="pathway">
    <text>Steroid biosynthesis; cholesterol biosynthesis.</text>
</comment>
<comment type="subcellular location">
    <subcellularLocation>
        <location evidence="2">Endoplasmic reticulum membrane</location>
        <topology evidence="4">Multi-pass membrane protein</topology>
    </subcellularLocation>
    <subcellularLocation>
        <location evidence="5">Microsome membrane</location>
        <topology evidence="4">Multi-pass membrane protein</topology>
    </subcellularLocation>
</comment>
<comment type="tissue specificity">
    <text evidence="5">Strongly expressed in liver, weaker in ovary, testis, kidney and brain.</text>
</comment>
<comment type="disruption phenotype">
    <text evidence="5">Mice develop normally, appear healthy and are fertile.</text>
</comment>
<comment type="similarity">
    <text evidence="6">Belongs to the ERG4/ERG24 family.</text>
</comment>
<proteinExistence type="evidence at protein level"/>
<accession>Q71KT5</accession>
<accession>B5LBK0</accession>
<gene>
    <name type="primary">Tm7sf2</name>
</gene>
<reference key="1">
    <citation type="submission" date="2002-01" db="EMBL/GenBank/DDBJ databases">
        <title>cDNA cloning and expression of the gene encoding the mouse C-14 sterol reductase.</title>
        <authorList>
            <person name="Roberti R."/>
            <person name="Bennati A.M."/>
        </authorList>
    </citation>
    <scope>NUCLEOTIDE SEQUENCE [MRNA]</scope>
</reference>
<reference key="2">
    <citation type="journal article" date="2008" name="FEBS J.">
        <title>Disruption of the gene encoding 3beta-hydroxysterol Delta14-reductase (Tm7sf2) in mice does not impair cholesterol biosynthesis.</title>
        <authorList>
            <person name="Bennati A.M."/>
            <person name="Schiavoni G."/>
            <person name="Franken S."/>
            <person name="Piobbico D."/>
            <person name="Della Fazia M.A."/>
            <person name="Caruso D."/>
            <person name="De Fabiani E."/>
            <person name="Benedetti L."/>
            <person name="Cusella De Angelis M.G."/>
            <person name="Gieselmann V."/>
            <person name="Servillo G."/>
            <person name="Beccari T."/>
            <person name="Roberti R."/>
        </authorList>
    </citation>
    <scope>NUCLEOTIDE SEQUENCE [GENOMIC DNA]</scope>
    <scope>FUNCTION</scope>
    <scope>CATALYTIC ACTIVITY</scope>
    <scope>SUBCELLULAR LOCATION</scope>
    <scope>DISRUPTION PHENOTYPE</scope>
    <scope>TISSUE SPECIFICITY</scope>
    <source>
        <strain>129/SvJ</strain>
    </source>
</reference>
<reference key="3">
    <citation type="journal article" date="2005" name="Science">
        <title>The transcriptional landscape of the mammalian genome.</title>
        <authorList>
            <person name="Carninci P."/>
            <person name="Kasukawa T."/>
            <person name="Katayama S."/>
            <person name="Gough J."/>
            <person name="Frith M.C."/>
            <person name="Maeda N."/>
            <person name="Oyama R."/>
            <person name="Ravasi T."/>
            <person name="Lenhard B."/>
            <person name="Wells C."/>
            <person name="Kodzius R."/>
            <person name="Shimokawa K."/>
            <person name="Bajic V.B."/>
            <person name="Brenner S.E."/>
            <person name="Batalov S."/>
            <person name="Forrest A.R."/>
            <person name="Zavolan M."/>
            <person name="Davis M.J."/>
            <person name="Wilming L.G."/>
            <person name="Aidinis V."/>
            <person name="Allen J.E."/>
            <person name="Ambesi-Impiombato A."/>
            <person name="Apweiler R."/>
            <person name="Aturaliya R.N."/>
            <person name="Bailey T.L."/>
            <person name="Bansal M."/>
            <person name="Baxter L."/>
            <person name="Beisel K.W."/>
            <person name="Bersano T."/>
            <person name="Bono H."/>
            <person name="Chalk A.M."/>
            <person name="Chiu K.P."/>
            <person name="Choudhary V."/>
            <person name="Christoffels A."/>
            <person name="Clutterbuck D.R."/>
            <person name="Crowe M.L."/>
            <person name="Dalla E."/>
            <person name="Dalrymple B.P."/>
            <person name="de Bono B."/>
            <person name="Della Gatta G."/>
            <person name="di Bernardo D."/>
            <person name="Down T."/>
            <person name="Engstrom P."/>
            <person name="Fagiolini M."/>
            <person name="Faulkner G."/>
            <person name="Fletcher C.F."/>
            <person name="Fukushima T."/>
            <person name="Furuno M."/>
            <person name="Futaki S."/>
            <person name="Gariboldi M."/>
            <person name="Georgii-Hemming P."/>
            <person name="Gingeras T.R."/>
            <person name="Gojobori T."/>
            <person name="Green R.E."/>
            <person name="Gustincich S."/>
            <person name="Harbers M."/>
            <person name="Hayashi Y."/>
            <person name="Hensch T.K."/>
            <person name="Hirokawa N."/>
            <person name="Hill D."/>
            <person name="Huminiecki L."/>
            <person name="Iacono M."/>
            <person name="Ikeo K."/>
            <person name="Iwama A."/>
            <person name="Ishikawa T."/>
            <person name="Jakt M."/>
            <person name="Kanapin A."/>
            <person name="Katoh M."/>
            <person name="Kawasawa Y."/>
            <person name="Kelso J."/>
            <person name="Kitamura H."/>
            <person name="Kitano H."/>
            <person name="Kollias G."/>
            <person name="Krishnan S.P."/>
            <person name="Kruger A."/>
            <person name="Kummerfeld S.K."/>
            <person name="Kurochkin I.V."/>
            <person name="Lareau L.F."/>
            <person name="Lazarevic D."/>
            <person name="Lipovich L."/>
            <person name="Liu J."/>
            <person name="Liuni S."/>
            <person name="McWilliam S."/>
            <person name="Madan Babu M."/>
            <person name="Madera M."/>
            <person name="Marchionni L."/>
            <person name="Matsuda H."/>
            <person name="Matsuzawa S."/>
            <person name="Miki H."/>
            <person name="Mignone F."/>
            <person name="Miyake S."/>
            <person name="Morris K."/>
            <person name="Mottagui-Tabar S."/>
            <person name="Mulder N."/>
            <person name="Nakano N."/>
            <person name="Nakauchi H."/>
            <person name="Ng P."/>
            <person name="Nilsson R."/>
            <person name="Nishiguchi S."/>
            <person name="Nishikawa S."/>
            <person name="Nori F."/>
            <person name="Ohara O."/>
            <person name="Okazaki Y."/>
            <person name="Orlando V."/>
            <person name="Pang K.C."/>
            <person name="Pavan W.J."/>
            <person name="Pavesi G."/>
            <person name="Pesole G."/>
            <person name="Petrovsky N."/>
            <person name="Piazza S."/>
            <person name="Reed J."/>
            <person name="Reid J.F."/>
            <person name="Ring B.Z."/>
            <person name="Ringwald M."/>
            <person name="Rost B."/>
            <person name="Ruan Y."/>
            <person name="Salzberg S.L."/>
            <person name="Sandelin A."/>
            <person name="Schneider C."/>
            <person name="Schoenbach C."/>
            <person name="Sekiguchi K."/>
            <person name="Semple C.A."/>
            <person name="Seno S."/>
            <person name="Sessa L."/>
            <person name="Sheng Y."/>
            <person name="Shibata Y."/>
            <person name="Shimada H."/>
            <person name="Shimada K."/>
            <person name="Silva D."/>
            <person name="Sinclair B."/>
            <person name="Sperling S."/>
            <person name="Stupka E."/>
            <person name="Sugiura K."/>
            <person name="Sultana R."/>
            <person name="Takenaka Y."/>
            <person name="Taki K."/>
            <person name="Tammoja K."/>
            <person name="Tan S.L."/>
            <person name="Tang S."/>
            <person name="Taylor M.S."/>
            <person name="Tegner J."/>
            <person name="Teichmann S.A."/>
            <person name="Ueda H.R."/>
            <person name="van Nimwegen E."/>
            <person name="Verardo R."/>
            <person name="Wei C.L."/>
            <person name="Yagi K."/>
            <person name="Yamanishi H."/>
            <person name="Zabarovsky E."/>
            <person name="Zhu S."/>
            <person name="Zimmer A."/>
            <person name="Hide W."/>
            <person name="Bult C."/>
            <person name="Grimmond S.M."/>
            <person name="Teasdale R.D."/>
            <person name="Liu E.T."/>
            <person name="Brusic V."/>
            <person name="Quackenbush J."/>
            <person name="Wahlestedt C."/>
            <person name="Mattick J.S."/>
            <person name="Hume D.A."/>
            <person name="Kai C."/>
            <person name="Sasaki D."/>
            <person name="Tomaru Y."/>
            <person name="Fukuda S."/>
            <person name="Kanamori-Katayama M."/>
            <person name="Suzuki M."/>
            <person name="Aoki J."/>
            <person name="Arakawa T."/>
            <person name="Iida J."/>
            <person name="Imamura K."/>
            <person name="Itoh M."/>
            <person name="Kato T."/>
            <person name="Kawaji H."/>
            <person name="Kawagashira N."/>
            <person name="Kawashima T."/>
            <person name="Kojima M."/>
            <person name="Kondo S."/>
            <person name="Konno H."/>
            <person name="Nakano K."/>
            <person name="Ninomiya N."/>
            <person name="Nishio T."/>
            <person name="Okada M."/>
            <person name="Plessy C."/>
            <person name="Shibata K."/>
            <person name="Shiraki T."/>
            <person name="Suzuki S."/>
            <person name="Tagami M."/>
            <person name="Waki K."/>
            <person name="Watahiki A."/>
            <person name="Okamura-Oho Y."/>
            <person name="Suzuki H."/>
            <person name="Kawai J."/>
            <person name="Hayashizaki Y."/>
        </authorList>
    </citation>
    <scope>NUCLEOTIDE SEQUENCE [LARGE SCALE MRNA]</scope>
    <source>
        <strain>NOD</strain>
    </source>
</reference>
<reference key="4">
    <citation type="submission" date="2005-07" db="EMBL/GenBank/DDBJ databases">
        <authorList>
            <person name="Mural R.J."/>
            <person name="Adams M.D."/>
            <person name="Myers E.W."/>
            <person name="Smith H.O."/>
            <person name="Venter J.C."/>
        </authorList>
    </citation>
    <scope>NUCLEOTIDE SEQUENCE [LARGE SCALE GENOMIC DNA]</scope>
</reference>
<reference key="5">
    <citation type="journal article" date="2010" name="Cell">
        <title>A tissue-specific atlas of mouse protein phosphorylation and expression.</title>
        <authorList>
            <person name="Huttlin E.L."/>
            <person name="Jedrychowski M.P."/>
            <person name="Elias J.E."/>
            <person name="Goswami T."/>
            <person name="Rad R."/>
            <person name="Beausoleil S.A."/>
            <person name="Villen J."/>
            <person name="Haas W."/>
            <person name="Sowa M.E."/>
            <person name="Gygi S.P."/>
        </authorList>
    </citation>
    <scope>IDENTIFICATION BY MASS SPECTROMETRY [LARGE SCALE ANALYSIS]</scope>
    <source>
        <tissue>Liver</tissue>
    </source>
</reference>
<keyword id="KW-0152">Cholesterol biosynthesis</keyword>
<keyword id="KW-0153">Cholesterol metabolism</keyword>
<keyword id="KW-0256">Endoplasmic reticulum</keyword>
<keyword id="KW-0444">Lipid biosynthesis</keyword>
<keyword id="KW-0443">Lipid metabolism</keyword>
<keyword id="KW-0472">Membrane</keyword>
<keyword id="KW-0492">Microsome</keyword>
<keyword id="KW-0521">NADP</keyword>
<keyword id="KW-0560">Oxidoreductase</keyword>
<keyword id="KW-1185">Reference proteome</keyword>
<keyword id="KW-0752">Steroid biosynthesis</keyword>
<keyword id="KW-0753">Steroid metabolism</keyword>
<keyword id="KW-0756">Sterol biosynthesis</keyword>
<keyword id="KW-1207">Sterol metabolism</keyword>
<keyword id="KW-0812">Transmembrane</keyword>
<keyword id="KW-1133">Transmembrane helix</keyword>
<sequence>MTSREASQAPLEFGGPLGVAALLILLPATMFHLLLAARSGPARLLALPAYLPGLEELWSPWALLLLFIWLGLQVALYLLPARKVAEGLELKDKSRLRYPINGFQALVLTALLMGLGVSVGLPLGALPGMLLPLAFATTLTSFIFSLLLYAKALVAPASALAPGGNSGNSMYDFFLGRELNPRLGSFDFKYFCELRPGLIGWVFINLALLMQEAELRGSPSLAMWLVNGFQLLYVGDALWYEESVLTTMDIIHDGFGFMLVFGDLAWVPFTYSLQAQFLLYHPQPLGLPMALLICLLKVIGYYIFRGANSQKNTFRKNPSDPSVAGLETIPTATGRQLLVSGWWGMVRHPNYLGDLIMALAWSLPCGLSHLLPYFYVLYFTALLVHREARDEQQCLQKYGRAWQEYCKRVPYRIIPYVY</sequence>
<dbReference type="EC" id="1.3.1.70" evidence="3"/>
<dbReference type="EMBL" id="AF480070">
    <property type="protein sequence ID" value="AAQ05836.1"/>
    <property type="molecule type" value="mRNA"/>
</dbReference>
<dbReference type="EMBL" id="EU672836">
    <property type="protein sequence ID" value="ACF94776.1"/>
    <property type="molecule type" value="Genomic_DNA"/>
</dbReference>
<dbReference type="EMBL" id="AK155475">
    <property type="protein sequence ID" value="BAE33285.1"/>
    <property type="molecule type" value="mRNA"/>
</dbReference>
<dbReference type="EMBL" id="CH466612">
    <property type="protein sequence ID" value="EDL33202.1"/>
    <property type="molecule type" value="Genomic_DNA"/>
</dbReference>
<dbReference type="CCDS" id="CCDS29490.2"/>
<dbReference type="RefSeq" id="NP_082730.2">
    <property type="nucleotide sequence ID" value="NM_028454.2"/>
</dbReference>
<dbReference type="SMR" id="Q71KT5"/>
<dbReference type="BioGRID" id="215810">
    <property type="interactions" value="1"/>
</dbReference>
<dbReference type="FunCoup" id="Q71KT5">
    <property type="interactions" value="1021"/>
</dbReference>
<dbReference type="STRING" id="10090.ENSMUSP00000025713"/>
<dbReference type="iPTMnet" id="Q71KT5"/>
<dbReference type="PhosphoSitePlus" id="Q71KT5"/>
<dbReference type="SwissPalm" id="Q71KT5"/>
<dbReference type="jPOST" id="Q71KT5"/>
<dbReference type="PaxDb" id="10090-ENSMUSP00000025713"/>
<dbReference type="PeptideAtlas" id="Q71KT5"/>
<dbReference type="ProteomicsDB" id="275769"/>
<dbReference type="Pumba" id="Q71KT5"/>
<dbReference type="Antibodypedia" id="29654">
    <property type="antibodies" value="120 antibodies from 24 providers"/>
</dbReference>
<dbReference type="DNASU" id="73166"/>
<dbReference type="Ensembl" id="ENSMUST00000025713.12">
    <property type="protein sequence ID" value="ENSMUSP00000025713.6"/>
    <property type="gene ID" value="ENSMUSG00000024799.17"/>
</dbReference>
<dbReference type="GeneID" id="73166"/>
<dbReference type="KEGG" id="mmu:73166"/>
<dbReference type="UCSC" id="uc008ggw.1">
    <property type="organism name" value="mouse"/>
</dbReference>
<dbReference type="AGR" id="MGI:1920416"/>
<dbReference type="CTD" id="7108"/>
<dbReference type="MGI" id="MGI:1920416">
    <property type="gene designation" value="Tm7sf2"/>
</dbReference>
<dbReference type="VEuPathDB" id="HostDB:ENSMUSG00000024799"/>
<dbReference type="eggNOG" id="KOG1435">
    <property type="taxonomic scope" value="Eukaryota"/>
</dbReference>
<dbReference type="GeneTree" id="ENSGT00390000000417"/>
<dbReference type="HOGENOM" id="CLU_015631_0_1_1"/>
<dbReference type="InParanoid" id="Q71KT5"/>
<dbReference type="OMA" id="EWCELRP"/>
<dbReference type="OrthoDB" id="5326588at2759"/>
<dbReference type="PhylomeDB" id="Q71KT5"/>
<dbReference type="TreeFam" id="TF101179"/>
<dbReference type="BRENDA" id="1.3.1.70">
    <property type="organism ID" value="3474"/>
</dbReference>
<dbReference type="Reactome" id="R-MMU-191273">
    <property type="pathway name" value="Cholesterol biosynthesis"/>
</dbReference>
<dbReference type="UniPathway" id="UPA00063"/>
<dbReference type="BioGRID-ORCS" id="73166">
    <property type="hits" value="4 hits in 80 CRISPR screens"/>
</dbReference>
<dbReference type="ChiTaRS" id="Tm7sf2">
    <property type="organism name" value="mouse"/>
</dbReference>
<dbReference type="PRO" id="PR:Q71KT5"/>
<dbReference type="Proteomes" id="UP000000589">
    <property type="component" value="Chromosome 19"/>
</dbReference>
<dbReference type="RNAct" id="Q71KT5">
    <property type="molecule type" value="protein"/>
</dbReference>
<dbReference type="Bgee" id="ENSMUSG00000024799">
    <property type="expression patterns" value="Expressed in left lobe of liver and 239 other cell types or tissues"/>
</dbReference>
<dbReference type="ExpressionAtlas" id="Q71KT5">
    <property type="expression patterns" value="baseline and differential"/>
</dbReference>
<dbReference type="GO" id="GO:0005789">
    <property type="term" value="C:endoplasmic reticulum membrane"/>
    <property type="evidence" value="ECO:0007669"/>
    <property type="project" value="UniProtKB-SubCell"/>
</dbReference>
<dbReference type="GO" id="GO:0031090">
    <property type="term" value="C:organelle membrane"/>
    <property type="evidence" value="ECO:0000314"/>
    <property type="project" value="UniProtKB"/>
</dbReference>
<dbReference type="GO" id="GO:0043235">
    <property type="term" value="C:receptor complex"/>
    <property type="evidence" value="ECO:0000266"/>
    <property type="project" value="MGI"/>
</dbReference>
<dbReference type="GO" id="GO:0050613">
    <property type="term" value="F:Delta14-sterol reductase activity"/>
    <property type="evidence" value="ECO:0000315"/>
    <property type="project" value="UniProtKB"/>
</dbReference>
<dbReference type="GO" id="GO:0050661">
    <property type="term" value="F:NADP binding"/>
    <property type="evidence" value="ECO:0000250"/>
    <property type="project" value="UniProtKB"/>
</dbReference>
<dbReference type="GO" id="GO:0006695">
    <property type="term" value="P:cholesterol biosynthetic process"/>
    <property type="evidence" value="ECO:0000314"/>
    <property type="project" value="UniProtKB"/>
</dbReference>
<dbReference type="FunFam" id="1.20.120.1630:FF:000001">
    <property type="entry name" value="delta(14)-sterol reductase isoform X1"/>
    <property type="match status" value="1"/>
</dbReference>
<dbReference type="Gene3D" id="1.20.120.1630">
    <property type="match status" value="1"/>
</dbReference>
<dbReference type="InterPro" id="IPR001171">
    <property type="entry name" value="ERG24_DHCR-like"/>
</dbReference>
<dbReference type="InterPro" id="IPR018083">
    <property type="entry name" value="Sterol_reductase_CS"/>
</dbReference>
<dbReference type="PANTHER" id="PTHR21257">
    <property type="entry name" value="DELTA(14)-STEROL REDUCTASE"/>
    <property type="match status" value="1"/>
</dbReference>
<dbReference type="PANTHER" id="PTHR21257:SF52">
    <property type="entry name" value="DELTA(14)-STEROL REDUCTASE TM7SF2"/>
    <property type="match status" value="1"/>
</dbReference>
<dbReference type="Pfam" id="PF01222">
    <property type="entry name" value="ERG4_ERG24"/>
    <property type="match status" value="1"/>
</dbReference>
<dbReference type="PROSITE" id="PS01017">
    <property type="entry name" value="STEROL_REDUCT_1"/>
    <property type="match status" value="1"/>
</dbReference>
<dbReference type="PROSITE" id="PS01018">
    <property type="entry name" value="STEROL_REDUCT_2"/>
    <property type="match status" value="1"/>
</dbReference>
<feature type="chain" id="PRO_0000331121" description="Delta(14)-sterol reductase TM7SF2">
    <location>
        <begin position="1"/>
        <end position="418"/>
    </location>
</feature>
<feature type="transmembrane region" description="Helical" evidence="4">
    <location>
        <begin position="13"/>
        <end position="35"/>
    </location>
</feature>
<feature type="transmembrane region" description="Helical" evidence="4">
    <location>
        <begin position="62"/>
        <end position="81"/>
    </location>
</feature>
<feature type="transmembrane region" description="Helical" evidence="4">
    <location>
        <begin position="102"/>
        <end position="124"/>
    </location>
</feature>
<feature type="transmembrane region" description="Helical" evidence="4">
    <location>
        <begin position="129"/>
        <end position="148"/>
    </location>
</feature>
<feature type="transmembrane region" description="Helical" evidence="4">
    <location>
        <begin position="255"/>
        <end position="277"/>
    </location>
</feature>
<feature type="transmembrane region" description="Helical" evidence="4">
    <location>
        <begin position="287"/>
        <end position="304"/>
    </location>
</feature>
<feature type="transmembrane region" description="Helical" evidence="4">
    <location>
        <begin position="355"/>
        <end position="377"/>
    </location>
</feature>
<feature type="binding site" evidence="1">
    <location>
        <position position="311"/>
    </location>
    <ligand>
        <name>NADP(+)</name>
        <dbReference type="ChEBI" id="CHEBI:58349"/>
    </ligand>
</feature>
<feature type="binding site" evidence="1">
    <location>
        <position position="315"/>
    </location>
    <ligand>
        <name>NADP(+)</name>
        <dbReference type="ChEBI" id="CHEBI:58349"/>
    </ligand>
</feature>
<feature type="binding site" evidence="1">
    <location>
        <position position="338"/>
    </location>
    <ligand>
        <name>NADP(+)</name>
        <dbReference type="ChEBI" id="CHEBI:58349"/>
    </ligand>
</feature>
<feature type="binding site" evidence="1">
    <location>
        <position position="343"/>
    </location>
    <ligand>
        <name>NADP(+)</name>
        <dbReference type="ChEBI" id="CHEBI:58349"/>
    </ligand>
</feature>
<feature type="binding site" evidence="1">
    <location>
        <begin position="350"/>
        <end position="351"/>
    </location>
    <ligand>
        <name>NADP(+)</name>
        <dbReference type="ChEBI" id="CHEBI:58349"/>
    </ligand>
</feature>
<feature type="binding site" evidence="1">
    <location>
        <position position="390"/>
    </location>
    <ligand>
        <name>NADP(+)</name>
        <dbReference type="ChEBI" id="CHEBI:58349"/>
    </ligand>
</feature>
<feature type="binding site" evidence="1">
    <location>
        <begin position="394"/>
        <end position="398"/>
    </location>
    <ligand>
        <name>NADP(+)</name>
        <dbReference type="ChEBI" id="CHEBI:58349"/>
    </ligand>
</feature>
<feature type="binding site" evidence="1">
    <location>
        <position position="405"/>
    </location>
    <ligand>
        <name>NADP(+)</name>
        <dbReference type="ChEBI" id="CHEBI:58349"/>
    </ligand>
</feature>
<feature type="sequence conflict" description="In Ref. 1; AAQ05836 and 3; BAE33285." evidence="6" ref="1 3">
    <original>V</original>
    <variation>A</variation>
    <location>
        <position position="298"/>
    </location>
</feature>
<protein>
    <recommendedName>
        <fullName>Delta(14)-sterol reductase TM7SF2</fullName>
        <shortName>Delta-14-SR</shortName>
        <ecNumber evidence="3">1.3.1.70</ecNumber>
    </recommendedName>
    <alternativeName>
        <fullName evidence="2">3-beta-hydroxysterol Delta (14)-reductase</fullName>
    </alternativeName>
    <alternativeName>
        <fullName>C-14 sterol reductase</fullName>
        <shortName>C14SR</shortName>
    </alternativeName>
    <alternativeName>
        <fullName>Sterol C14-reductase</fullName>
    </alternativeName>
    <alternativeName>
        <fullName>Transmembrane 7 superfamily member 2</fullName>
    </alternativeName>
</protein>